<evidence type="ECO:0000255" key="1">
    <source>
        <dbReference type="HAMAP-Rule" id="MF_00017"/>
    </source>
</evidence>
<comment type="function">
    <text evidence="1">May play a role in DNA repair. It seems to be involved in an RecBC-independent recombinational process of DNA repair. It may act with RecF and RecO.</text>
</comment>
<comment type="similarity">
    <text evidence="1">Belongs to the RecR family.</text>
</comment>
<reference key="1">
    <citation type="journal article" date="2011" name="J. Bacteriol.">
        <title>Complete genome sequence of the Thermophilic Bacterium Exiguobacterium sp. AT1b.</title>
        <authorList>
            <person name="Vishnivetskaya T.A."/>
            <person name="Lucas S."/>
            <person name="Copeland A."/>
            <person name="Lapidus A."/>
            <person name="Glavina del Rio T."/>
            <person name="Dalin E."/>
            <person name="Tice H."/>
            <person name="Bruce D.C."/>
            <person name="Goodwin L.A."/>
            <person name="Pitluck S."/>
            <person name="Saunders E."/>
            <person name="Brettin T."/>
            <person name="Detter C."/>
            <person name="Han C."/>
            <person name="Larimer F."/>
            <person name="Land M.L."/>
            <person name="Hauser L.J."/>
            <person name="Kyrpides N.C."/>
            <person name="Ovchinnikova G."/>
            <person name="Kathariou S."/>
            <person name="Ramaley R.F."/>
            <person name="Rodrigues D.F."/>
            <person name="Hendrix C."/>
            <person name="Richardson P."/>
            <person name="Tiedje J.M."/>
        </authorList>
    </citation>
    <scope>NUCLEOTIDE SEQUENCE [LARGE SCALE GENOMIC DNA]</scope>
    <source>
        <strain>ATCC BAA-1283 / AT1b</strain>
    </source>
</reference>
<sequence>MQYPEAIGRLIESFTKLPGIGPKTAVRLAFHVLDMEEDDVLTFAKSLVSAKRDIKYCTVCGHITDIDPCAICKDSHRDETVVCVVQDSRDVIAMEKMREYRGKYHVLHGAISPMEGIGPEDINVSSLLTRLQENESIQEVILATNPNIEGEATSMYLSRLLKPTGIRVTRLAHGLPVGGDLEYADEVTLSRAMEGRREL</sequence>
<accession>C4KZX2</accession>
<gene>
    <name evidence="1" type="primary">recR</name>
    <name type="ordered locus">EAT1b_1709</name>
</gene>
<feature type="chain" id="PRO_1000201861" description="Recombination protein RecR">
    <location>
        <begin position="1"/>
        <end position="199"/>
    </location>
</feature>
<feature type="domain" description="Toprim" evidence="1">
    <location>
        <begin position="80"/>
        <end position="176"/>
    </location>
</feature>
<feature type="zinc finger region" description="C4-type" evidence="1">
    <location>
        <begin position="57"/>
        <end position="72"/>
    </location>
</feature>
<name>RECR_EXISA</name>
<dbReference type="EMBL" id="CP001615">
    <property type="protein sequence ID" value="ACQ70635.1"/>
    <property type="molecule type" value="Genomic_DNA"/>
</dbReference>
<dbReference type="RefSeq" id="WP_012727753.1">
    <property type="nucleotide sequence ID" value="NZ_MOEL01000010.1"/>
</dbReference>
<dbReference type="SMR" id="C4KZX2"/>
<dbReference type="STRING" id="360911.EAT1b_1709"/>
<dbReference type="GeneID" id="94370644"/>
<dbReference type="KEGG" id="eat:EAT1b_1709"/>
<dbReference type="eggNOG" id="COG0353">
    <property type="taxonomic scope" value="Bacteria"/>
</dbReference>
<dbReference type="HOGENOM" id="CLU_060739_1_0_9"/>
<dbReference type="OrthoDB" id="9802672at2"/>
<dbReference type="Proteomes" id="UP000000716">
    <property type="component" value="Chromosome"/>
</dbReference>
<dbReference type="GO" id="GO:0003677">
    <property type="term" value="F:DNA binding"/>
    <property type="evidence" value="ECO:0007669"/>
    <property type="project" value="UniProtKB-UniRule"/>
</dbReference>
<dbReference type="GO" id="GO:0008270">
    <property type="term" value="F:zinc ion binding"/>
    <property type="evidence" value="ECO:0007669"/>
    <property type="project" value="UniProtKB-KW"/>
</dbReference>
<dbReference type="GO" id="GO:0006310">
    <property type="term" value="P:DNA recombination"/>
    <property type="evidence" value="ECO:0007669"/>
    <property type="project" value="UniProtKB-UniRule"/>
</dbReference>
<dbReference type="GO" id="GO:0006281">
    <property type="term" value="P:DNA repair"/>
    <property type="evidence" value="ECO:0007669"/>
    <property type="project" value="UniProtKB-UniRule"/>
</dbReference>
<dbReference type="CDD" id="cd01025">
    <property type="entry name" value="TOPRIM_recR"/>
    <property type="match status" value="1"/>
</dbReference>
<dbReference type="Gene3D" id="3.30.60.80">
    <property type="match status" value="1"/>
</dbReference>
<dbReference type="Gene3D" id="3.40.1360.10">
    <property type="match status" value="1"/>
</dbReference>
<dbReference type="Gene3D" id="6.10.250.240">
    <property type="match status" value="1"/>
</dbReference>
<dbReference type="Gene3D" id="1.10.8.420">
    <property type="entry name" value="RecR Domain 1"/>
    <property type="match status" value="1"/>
</dbReference>
<dbReference type="HAMAP" id="MF_00017">
    <property type="entry name" value="RecR"/>
    <property type="match status" value="1"/>
</dbReference>
<dbReference type="InterPro" id="IPR000093">
    <property type="entry name" value="DNA_Rcmb_RecR"/>
</dbReference>
<dbReference type="InterPro" id="IPR023627">
    <property type="entry name" value="Rcmb_RecR"/>
</dbReference>
<dbReference type="InterPro" id="IPR015967">
    <property type="entry name" value="Rcmb_RecR_Znf"/>
</dbReference>
<dbReference type="InterPro" id="IPR006171">
    <property type="entry name" value="TOPRIM_dom"/>
</dbReference>
<dbReference type="InterPro" id="IPR034137">
    <property type="entry name" value="TOPRIM_RecR"/>
</dbReference>
<dbReference type="NCBIfam" id="TIGR00615">
    <property type="entry name" value="recR"/>
    <property type="match status" value="1"/>
</dbReference>
<dbReference type="PANTHER" id="PTHR30446">
    <property type="entry name" value="RECOMBINATION PROTEIN RECR"/>
    <property type="match status" value="1"/>
</dbReference>
<dbReference type="PANTHER" id="PTHR30446:SF0">
    <property type="entry name" value="RECOMBINATION PROTEIN RECR"/>
    <property type="match status" value="1"/>
</dbReference>
<dbReference type="Pfam" id="PF21175">
    <property type="entry name" value="RecR_C"/>
    <property type="match status" value="1"/>
</dbReference>
<dbReference type="Pfam" id="PF21176">
    <property type="entry name" value="RecR_HhH"/>
    <property type="match status" value="1"/>
</dbReference>
<dbReference type="Pfam" id="PF02132">
    <property type="entry name" value="RecR_ZnF"/>
    <property type="match status" value="1"/>
</dbReference>
<dbReference type="Pfam" id="PF13662">
    <property type="entry name" value="Toprim_4"/>
    <property type="match status" value="1"/>
</dbReference>
<dbReference type="SMART" id="SM00493">
    <property type="entry name" value="TOPRIM"/>
    <property type="match status" value="1"/>
</dbReference>
<dbReference type="SUPFAM" id="SSF111304">
    <property type="entry name" value="Recombination protein RecR"/>
    <property type="match status" value="1"/>
</dbReference>
<dbReference type="PROSITE" id="PS01300">
    <property type="entry name" value="RECR"/>
    <property type="match status" value="1"/>
</dbReference>
<dbReference type="PROSITE" id="PS50880">
    <property type="entry name" value="TOPRIM"/>
    <property type="match status" value="1"/>
</dbReference>
<keyword id="KW-0227">DNA damage</keyword>
<keyword id="KW-0233">DNA recombination</keyword>
<keyword id="KW-0234">DNA repair</keyword>
<keyword id="KW-0479">Metal-binding</keyword>
<keyword id="KW-0862">Zinc</keyword>
<keyword id="KW-0863">Zinc-finger</keyword>
<organism>
    <name type="scientific">Exiguobacterium sp. (strain ATCC BAA-1283 / AT1b)</name>
    <dbReference type="NCBI Taxonomy" id="360911"/>
    <lineage>
        <taxon>Bacteria</taxon>
        <taxon>Bacillati</taxon>
        <taxon>Bacillota</taxon>
        <taxon>Bacilli</taxon>
        <taxon>Bacillales</taxon>
        <taxon>Bacillales Family XII. Incertae Sedis</taxon>
        <taxon>Exiguobacterium</taxon>
    </lineage>
</organism>
<proteinExistence type="inferred from homology"/>
<protein>
    <recommendedName>
        <fullName evidence="1">Recombination protein RecR</fullName>
    </recommendedName>
</protein>